<proteinExistence type="evidence at transcript level"/>
<organism>
    <name type="scientific">Arabidopsis thaliana</name>
    <name type="common">Mouse-ear cress</name>
    <dbReference type="NCBI Taxonomy" id="3702"/>
    <lineage>
        <taxon>Eukaryota</taxon>
        <taxon>Viridiplantae</taxon>
        <taxon>Streptophyta</taxon>
        <taxon>Embryophyta</taxon>
        <taxon>Tracheophyta</taxon>
        <taxon>Spermatophyta</taxon>
        <taxon>Magnoliopsida</taxon>
        <taxon>eudicotyledons</taxon>
        <taxon>Gunneridae</taxon>
        <taxon>Pentapetalae</taxon>
        <taxon>rosids</taxon>
        <taxon>malvids</taxon>
        <taxon>Brassicales</taxon>
        <taxon>Brassicaceae</taxon>
        <taxon>Camelineae</taxon>
        <taxon>Arabidopsis</taxon>
    </lineage>
</organism>
<name>RL123_ARATH</name>
<comment type="function">
    <text evidence="1">Binds directly to 26S ribosomal RNA.</text>
</comment>
<comment type="similarity">
    <text evidence="3">Belongs to the universal ribosomal protein uL11 family.</text>
</comment>
<accession>Q9FF52</accession>
<gene>
    <name type="primary">RPL12C</name>
    <name type="ordered locus">At5g60670</name>
    <name type="ORF">MUP24.13</name>
    <name type="ORF">MUP24.9</name>
</gene>
<reference key="1">
    <citation type="journal article" date="1997" name="DNA Res.">
        <title>Structural analysis of Arabidopsis thaliana chromosome 5. I. Sequence features of the 1.6 Mb regions covered by twenty physically assigned P1 clones.</title>
        <authorList>
            <person name="Sato S."/>
            <person name="Kotani H."/>
            <person name="Nakamura Y."/>
            <person name="Kaneko T."/>
            <person name="Asamizu E."/>
            <person name="Fukami M."/>
            <person name="Miyajima N."/>
            <person name="Tabata S."/>
        </authorList>
    </citation>
    <scope>NUCLEOTIDE SEQUENCE [LARGE SCALE GENOMIC DNA]</scope>
    <source>
        <strain>cv. Columbia</strain>
    </source>
</reference>
<reference key="2">
    <citation type="journal article" date="2017" name="Plant J.">
        <title>Araport11: a complete reannotation of the Arabidopsis thaliana reference genome.</title>
        <authorList>
            <person name="Cheng C.Y."/>
            <person name="Krishnakumar V."/>
            <person name="Chan A.P."/>
            <person name="Thibaud-Nissen F."/>
            <person name="Schobel S."/>
            <person name="Town C.D."/>
        </authorList>
    </citation>
    <scope>GENOME REANNOTATION</scope>
    <source>
        <strain>cv. Columbia</strain>
    </source>
</reference>
<reference key="3">
    <citation type="journal article" date="2003" name="Science">
        <title>Empirical analysis of transcriptional activity in the Arabidopsis genome.</title>
        <authorList>
            <person name="Yamada K."/>
            <person name="Lim J."/>
            <person name="Dale J.M."/>
            <person name="Chen H."/>
            <person name="Shinn P."/>
            <person name="Palm C.J."/>
            <person name="Southwick A.M."/>
            <person name="Wu H.C."/>
            <person name="Kim C.J."/>
            <person name="Nguyen M."/>
            <person name="Pham P.K."/>
            <person name="Cheuk R.F."/>
            <person name="Karlin-Newmann G."/>
            <person name="Liu S.X."/>
            <person name="Lam B."/>
            <person name="Sakano H."/>
            <person name="Wu T."/>
            <person name="Yu G."/>
            <person name="Miranda M."/>
            <person name="Quach H.L."/>
            <person name="Tripp M."/>
            <person name="Chang C.H."/>
            <person name="Lee J.M."/>
            <person name="Toriumi M.J."/>
            <person name="Chan M.M."/>
            <person name="Tang C.C."/>
            <person name="Onodera C.S."/>
            <person name="Deng J.M."/>
            <person name="Akiyama K."/>
            <person name="Ansari Y."/>
            <person name="Arakawa T."/>
            <person name="Banh J."/>
            <person name="Banno F."/>
            <person name="Bowser L."/>
            <person name="Brooks S.Y."/>
            <person name="Carninci P."/>
            <person name="Chao Q."/>
            <person name="Choy N."/>
            <person name="Enju A."/>
            <person name="Goldsmith A.D."/>
            <person name="Gurjal M."/>
            <person name="Hansen N.F."/>
            <person name="Hayashizaki Y."/>
            <person name="Johnson-Hopson C."/>
            <person name="Hsuan V.W."/>
            <person name="Iida K."/>
            <person name="Karnes M."/>
            <person name="Khan S."/>
            <person name="Koesema E."/>
            <person name="Ishida J."/>
            <person name="Jiang P.X."/>
            <person name="Jones T."/>
            <person name="Kawai J."/>
            <person name="Kamiya A."/>
            <person name="Meyers C."/>
            <person name="Nakajima M."/>
            <person name="Narusaka M."/>
            <person name="Seki M."/>
            <person name="Sakurai T."/>
            <person name="Satou M."/>
            <person name="Tamse R."/>
            <person name="Vaysberg M."/>
            <person name="Wallender E.K."/>
            <person name="Wong C."/>
            <person name="Yamamura Y."/>
            <person name="Yuan S."/>
            <person name="Shinozaki K."/>
            <person name="Davis R.W."/>
            <person name="Theologis A."/>
            <person name="Ecker J.R."/>
        </authorList>
    </citation>
    <scope>NUCLEOTIDE SEQUENCE [LARGE SCALE MRNA]</scope>
    <source>
        <strain>cv. Columbia</strain>
    </source>
</reference>
<reference key="4">
    <citation type="submission" date="2002-03" db="EMBL/GenBank/DDBJ databases">
        <title>Full-length cDNA from Arabidopsis thaliana.</title>
        <authorList>
            <person name="Brover V.V."/>
            <person name="Troukhan M.E."/>
            <person name="Alexandrov N.A."/>
            <person name="Lu Y.-P."/>
            <person name="Flavell R.B."/>
            <person name="Feldmann K.A."/>
        </authorList>
    </citation>
    <scope>NUCLEOTIDE SEQUENCE [LARGE SCALE MRNA]</scope>
</reference>
<reference key="5">
    <citation type="journal article" date="2001" name="Plant Physiol.">
        <title>The organization of cytoplasmic ribosomal protein genes in the Arabidopsis genome.</title>
        <authorList>
            <person name="Barakat A."/>
            <person name="Szick-Miranda K."/>
            <person name="Chang I.-F."/>
            <person name="Guyot R."/>
            <person name="Blanc G."/>
            <person name="Cooke R."/>
            <person name="Delseny M."/>
            <person name="Bailey-Serres J."/>
        </authorList>
    </citation>
    <scope>GENE FAMILY ORGANIZATION</scope>
    <scope>NOMENCLATURE</scope>
</reference>
<reference key="6">
    <citation type="journal article" date="2023" name="Plant Cell">
        <title>An updated nomenclature for plant ribosomal protein genes.</title>
        <authorList>
            <person name="Scarpin M.R."/>
            <person name="Busche M."/>
            <person name="Martinez R.E."/>
            <person name="Harper L.C."/>
            <person name="Reiser L."/>
            <person name="Szakonyi D."/>
            <person name="Merchante C."/>
            <person name="Lan T."/>
            <person name="Xiong W."/>
            <person name="Mo B."/>
            <person name="Tang G."/>
            <person name="Chen X."/>
            <person name="Bailey-Serres J."/>
            <person name="Browning K.S."/>
            <person name="Brunkard J.O."/>
        </authorList>
    </citation>
    <scope>NOMENCLATURE</scope>
</reference>
<dbReference type="EMBL" id="AB005246">
    <property type="protein sequence ID" value="BAB09840.1"/>
    <property type="molecule type" value="Genomic_DNA"/>
</dbReference>
<dbReference type="EMBL" id="CP002688">
    <property type="protein sequence ID" value="AED97365.1"/>
    <property type="molecule type" value="Genomic_DNA"/>
</dbReference>
<dbReference type="EMBL" id="AY039614">
    <property type="protein sequence ID" value="AAK62669.1"/>
    <property type="molecule type" value="mRNA"/>
</dbReference>
<dbReference type="EMBL" id="AY078025">
    <property type="protein sequence ID" value="AAL77726.1"/>
    <property type="molecule type" value="mRNA"/>
</dbReference>
<dbReference type="EMBL" id="AY088164">
    <property type="protein sequence ID" value="AAM65708.1"/>
    <property type="molecule type" value="mRNA"/>
</dbReference>
<dbReference type="RefSeq" id="NP_200875.1">
    <property type="nucleotide sequence ID" value="NM_125460.3"/>
</dbReference>
<dbReference type="SMR" id="Q9FF52"/>
<dbReference type="BioGRID" id="21432">
    <property type="interactions" value="63"/>
</dbReference>
<dbReference type="FunCoup" id="Q9FF52">
    <property type="interactions" value="3069"/>
</dbReference>
<dbReference type="STRING" id="3702.Q9FF52"/>
<dbReference type="PaxDb" id="3702-AT5G60670.1"/>
<dbReference type="ProteomicsDB" id="236197"/>
<dbReference type="EnsemblPlants" id="AT5G60670.1">
    <property type="protein sequence ID" value="AT5G60670.1"/>
    <property type="gene ID" value="AT5G60670"/>
</dbReference>
<dbReference type="GeneID" id="836188"/>
<dbReference type="Gramene" id="AT5G60670.1">
    <property type="protein sequence ID" value="AT5G60670.1"/>
    <property type="gene ID" value="AT5G60670"/>
</dbReference>
<dbReference type="KEGG" id="ath:AT5G60670"/>
<dbReference type="Araport" id="AT5G60670"/>
<dbReference type="TAIR" id="AT5G60670">
    <property type="gene designation" value="RPL12C"/>
</dbReference>
<dbReference type="eggNOG" id="KOG0886">
    <property type="taxonomic scope" value="Eukaryota"/>
</dbReference>
<dbReference type="HOGENOM" id="CLU_074237_5_0_1"/>
<dbReference type="InParanoid" id="Q9FF52"/>
<dbReference type="OMA" id="SSRIWVH"/>
<dbReference type="OrthoDB" id="10250051at2759"/>
<dbReference type="PhylomeDB" id="Q9FF52"/>
<dbReference type="PRO" id="PR:Q9FF52"/>
<dbReference type="Proteomes" id="UP000006548">
    <property type="component" value="Chromosome 5"/>
</dbReference>
<dbReference type="ExpressionAtlas" id="Q9FF52">
    <property type="expression patterns" value="baseline and differential"/>
</dbReference>
<dbReference type="GO" id="GO:0022625">
    <property type="term" value="C:cytosolic large ribosomal subunit"/>
    <property type="evidence" value="ECO:0007005"/>
    <property type="project" value="TAIR"/>
</dbReference>
<dbReference type="GO" id="GO:0009536">
    <property type="term" value="C:plastid"/>
    <property type="evidence" value="ECO:0007005"/>
    <property type="project" value="TAIR"/>
</dbReference>
<dbReference type="GO" id="GO:0003729">
    <property type="term" value="F:mRNA binding"/>
    <property type="evidence" value="ECO:0000314"/>
    <property type="project" value="TAIR"/>
</dbReference>
<dbReference type="GO" id="GO:0019843">
    <property type="term" value="F:rRNA binding"/>
    <property type="evidence" value="ECO:0007669"/>
    <property type="project" value="UniProtKB-KW"/>
</dbReference>
<dbReference type="GO" id="GO:0003735">
    <property type="term" value="F:structural constituent of ribosome"/>
    <property type="evidence" value="ECO:0000314"/>
    <property type="project" value="CAFA"/>
</dbReference>
<dbReference type="GO" id="GO:0006412">
    <property type="term" value="P:translation"/>
    <property type="evidence" value="ECO:0007669"/>
    <property type="project" value="InterPro"/>
</dbReference>
<dbReference type="CDD" id="cd00349">
    <property type="entry name" value="Ribosomal_L11"/>
    <property type="match status" value="1"/>
</dbReference>
<dbReference type="FunFam" id="1.10.10.250:FF:000002">
    <property type="entry name" value="60S ribosomal protein L12"/>
    <property type="match status" value="1"/>
</dbReference>
<dbReference type="FunFam" id="3.30.1550.10:FF:000002">
    <property type="entry name" value="60S ribosomal protein L12"/>
    <property type="match status" value="1"/>
</dbReference>
<dbReference type="Gene3D" id="1.10.10.250">
    <property type="entry name" value="Ribosomal protein L11, C-terminal domain"/>
    <property type="match status" value="1"/>
</dbReference>
<dbReference type="Gene3D" id="3.30.1550.10">
    <property type="entry name" value="Ribosomal protein L11/L12, N-terminal domain"/>
    <property type="match status" value="1"/>
</dbReference>
<dbReference type="HAMAP" id="MF_00736">
    <property type="entry name" value="Ribosomal_uL11"/>
    <property type="match status" value="1"/>
</dbReference>
<dbReference type="InterPro" id="IPR000911">
    <property type="entry name" value="Ribosomal_uL11"/>
</dbReference>
<dbReference type="InterPro" id="IPR020783">
    <property type="entry name" value="Ribosomal_uL11_C"/>
</dbReference>
<dbReference type="InterPro" id="IPR036769">
    <property type="entry name" value="Ribosomal_uL11_C_sf"/>
</dbReference>
<dbReference type="InterPro" id="IPR020785">
    <property type="entry name" value="Ribosomal_uL11_CS"/>
</dbReference>
<dbReference type="InterPro" id="IPR020784">
    <property type="entry name" value="Ribosomal_uL11_N"/>
</dbReference>
<dbReference type="InterPro" id="IPR036796">
    <property type="entry name" value="Ribosomal_uL11_N_sf"/>
</dbReference>
<dbReference type="PANTHER" id="PTHR11661">
    <property type="entry name" value="60S RIBOSOMAL PROTEIN L12"/>
    <property type="match status" value="1"/>
</dbReference>
<dbReference type="PANTHER" id="PTHR11661:SF44">
    <property type="entry name" value="LARGE RIBOSOMAL SUBUNIT PROTEIN UL11X"/>
    <property type="match status" value="1"/>
</dbReference>
<dbReference type="Pfam" id="PF00298">
    <property type="entry name" value="Ribosomal_L11"/>
    <property type="match status" value="1"/>
</dbReference>
<dbReference type="Pfam" id="PF03946">
    <property type="entry name" value="Ribosomal_L11_N"/>
    <property type="match status" value="1"/>
</dbReference>
<dbReference type="SMART" id="SM00649">
    <property type="entry name" value="RL11"/>
    <property type="match status" value="1"/>
</dbReference>
<dbReference type="SUPFAM" id="SSF54747">
    <property type="entry name" value="Ribosomal L11/L12e N-terminal domain"/>
    <property type="match status" value="1"/>
</dbReference>
<dbReference type="SUPFAM" id="SSF46906">
    <property type="entry name" value="Ribosomal protein L11, C-terminal domain"/>
    <property type="match status" value="1"/>
</dbReference>
<dbReference type="PROSITE" id="PS00359">
    <property type="entry name" value="RIBOSOMAL_L11"/>
    <property type="match status" value="1"/>
</dbReference>
<keyword id="KW-1185">Reference proteome</keyword>
<keyword id="KW-0687">Ribonucleoprotein</keyword>
<keyword id="KW-0689">Ribosomal protein</keyword>
<keyword id="KW-0694">RNA-binding</keyword>
<keyword id="KW-0699">rRNA-binding</keyword>
<protein>
    <recommendedName>
        <fullName evidence="2">Large ribosomal subunit protein uL11x</fullName>
    </recommendedName>
    <alternativeName>
        <fullName>60S ribosomal protein L12-3</fullName>
    </alternativeName>
</protein>
<sequence length="166" mass="17843">MPPKLDPSQIVDVYVRVTGGEVGAASSLAPKIGPLGLAPKKIGEDIAKETAKEWKGLRVTVKLTVQNRQAKVTVVPSAAALVIKALKEPERDRKKVKNIKHNGNISFDDVIEIAKIMRPRSIAKELSGTVKEILGTCVSVGCTVDGKDPKDLQEEINSGDIDIPNE</sequence>
<evidence type="ECO:0000250" key="1"/>
<evidence type="ECO:0000303" key="2">
    <source>
    </source>
</evidence>
<evidence type="ECO:0000305" key="3"/>
<feature type="chain" id="PRO_0000240129" description="Large ribosomal subunit protein uL11x">
    <location>
        <begin position="1"/>
        <end position="166"/>
    </location>
</feature>